<name>RUVA_STRPJ</name>
<proteinExistence type="inferred from homology"/>
<accession>B8ZKD4</accession>
<feature type="chain" id="PRO_1000116981" description="Holliday junction branch migration complex subunit RuvA">
    <location>
        <begin position="1"/>
        <end position="197"/>
    </location>
</feature>
<feature type="region of interest" description="Domain I" evidence="1">
    <location>
        <begin position="1"/>
        <end position="63"/>
    </location>
</feature>
<feature type="region of interest" description="Domain II" evidence="1">
    <location>
        <begin position="64"/>
        <end position="142"/>
    </location>
</feature>
<feature type="region of interest" description="Flexible linker" evidence="1">
    <location>
        <begin position="143"/>
        <end position="147"/>
    </location>
</feature>
<feature type="region of interest" description="Domain III" evidence="1">
    <location>
        <begin position="148"/>
        <end position="197"/>
    </location>
</feature>
<reference key="1">
    <citation type="journal article" date="2009" name="J. Bacteriol.">
        <title>Role of conjugative elements in the evolution of the multidrug-resistant pandemic clone Streptococcus pneumoniae Spain23F ST81.</title>
        <authorList>
            <person name="Croucher N.J."/>
            <person name="Walker D."/>
            <person name="Romero P."/>
            <person name="Lennard N."/>
            <person name="Paterson G.K."/>
            <person name="Bason N.C."/>
            <person name="Mitchell A.M."/>
            <person name="Quail M.A."/>
            <person name="Andrew P.W."/>
            <person name="Parkhill J."/>
            <person name="Bentley S.D."/>
            <person name="Mitchell T.J."/>
        </authorList>
    </citation>
    <scope>NUCLEOTIDE SEQUENCE [LARGE SCALE GENOMIC DNA]</scope>
    <source>
        <strain>ATCC 700669 / Spain 23F-1</strain>
    </source>
</reference>
<comment type="function">
    <text evidence="1">The RuvA-RuvB-RuvC complex processes Holliday junction (HJ) DNA during genetic recombination and DNA repair, while the RuvA-RuvB complex plays an important role in the rescue of blocked DNA replication forks via replication fork reversal (RFR). RuvA specifically binds to HJ cruciform DNA, conferring on it an open structure. The RuvB hexamer acts as an ATP-dependent pump, pulling dsDNA into and through the RuvAB complex. HJ branch migration allows RuvC to scan DNA until it finds its consensus sequence, where it cleaves and resolves the cruciform DNA.</text>
</comment>
<comment type="subunit">
    <text evidence="1">Homotetramer. Forms an RuvA(8)-RuvB(12)-Holliday junction (HJ) complex. HJ DNA is sandwiched between 2 RuvA tetramers; dsDNA enters through RuvA and exits via RuvB. An RuvB hexamer assembles on each DNA strand where it exits the tetramer. Each RuvB hexamer is contacted by two RuvA subunits (via domain III) on 2 adjacent RuvB subunits; this complex drives branch migration. In the full resolvosome a probable DNA-RuvA(4)-RuvB(12)-RuvC(2) complex forms which resolves the HJ.</text>
</comment>
<comment type="subcellular location">
    <subcellularLocation>
        <location evidence="1">Cytoplasm</location>
    </subcellularLocation>
</comment>
<comment type="domain">
    <text evidence="1">Has three domains with a flexible linker between the domains II and III and assumes an 'L' shape. Domain III is highly mobile and contacts RuvB.</text>
</comment>
<comment type="similarity">
    <text evidence="1">Belongs to the RuvA family.</text>
</comment>
<dbReference type="EMBL" id="FM211187">
    <property type="protein sequence ID" value="CAR68036.1"/>
    <property type="molecule type" value="Genomic_DNA"/>
</dbReference>
<dbReference type="RefSeq" id="WP_000271489.1">
    <property type="nucleotide sequence ID" value="NC_011900.1"/>
</dbReference>
<dbReference type="SMR" id="B8ZKD4"/>
<dbReference type="KEGG" id="sne:SPN23F01760"/>
<dbReference type="HOGENOM" id="CLU_087936_1_0_9"/>
<dbReference type="GO" id="GO:0005737">
    <property type="term" value="C:cytoplasm"/>
    <property type="evidence" value="ECO:0007669"/>
    <property type="project" value="UniProtKB-SubCell"/>
</dbReference>
<dbReference type="GO" id="GO:0009379">
    <property type="term" value="C:Holliday junction helicase complex"/>
    <property type="evidence" value="ECO:0007669"/>
    <property type="project" value="InterPro"/>
</dbReference>
<dbReference type="GO" id="GO:0048476">
    <property type="term" value="C:Holliday junction resolvase complex"/>
    <property type="evidence" value="ECO:0007669"/>
    <property type="project" value="UniProtKB-UniRule"/>
</dbReference>
<dbReference type="GO" id="GO:0005524">
    <property type="term" value="F:ATP binding"/>
    <property type="evidence" value="ECO:0007669"/>
    <property type="project" value="InterPro"/>
</dbReference>
<dbReference type="GO" id="GO:0000400">
    <property type="term" value="F:four-way junction DNA binding"/>
    <property type="evidence" value="ECO:0007669"/>
    <property type="project" value="UniProtKB-UniRule"/>
</dbReference>
<dbReference type="GO" id="GO:0009378">
    <property type="term" value="F:four-way junction helicase activity"/>
    <property type="evidence" value="ECO:0007669"/>
    <property type="project" value="InterPro"/>
</dbReference>
<dbReference type="GO" id="GO:0006310">
    <property type="term" value="P:DNA recombination"/>
    <property type="evidence" value="ECO:0007669"/>
    <property type="project" value="UniProtKB-UniRule"/>
</dbReference>
<dbReference type="GO" id="GO:0006281">
    <property type="term" value="P:DNA repair"/>
    <property type="evidence" value="ECO:0007669"/>
    <property type="project" value="UniProtKB-UniRule"/>
</dbReference>
<dbReference type="CDD" id="cd14332">
    <property type="entry name" value="UBA_RuvA_C"/>
    <property type="match status" value="1"/>
</dbReference>
<dbReference type="Gene3D" id="1.10.150.20">
    <property type="entry name" value="5' to 3' exonuclease, C-terminal subdomain"/>
    <property type="match status" value="1"/>
</dbReference>
<dbReference type="Gene3D" id="1.10.8.10">
    <property type="entry name" value="DNA helicase RuvA subunit, C-terminal domain"/>
    <property type="match status" value="1"/>
</dbReference>
<dbReference type="Gene3D" id="2.40.50.140">
    <property type="entry name" value="Nucleic acid-binding proteins"/>
    <property type="match status" value="1"/>
</dbReference>
<dbReference type="HAMAP" id="MF_00031">
    <property type="entry name" value="DNA_HJ_migration_RuvA"/>
    <property type="match status" value="1"/>
</dbReference>
<dbReference type="InterPro" id="IPR013849">
    <property type="entry name" value="DNA_helicase_Holl-junc_RuvA_I"/>
</dbReference>
<dbReference type="InterPro" id="IPR003583">
    <property type="entry name" value="Hlx-hairpin-Hlx_DNA-bd_motif"/>
</dbReference>
<dbReference type="InterPro" id="IPR012340">
    <property type="entry name" value="NA-bd_OB-fold"/>
</dbReference>
<dbReference type="InterPro" id="IPR000085">
    <property type="entry name" value="RuvA"/>
</dbReference>
<dbReference type="InterPro" id="IPR010994">
    <property type="entry name" value="RuvA_2-like"/>
</dbReference>
<dbReference type="InterPro" id="IPR011114">
    <property type="entry name" value="RuvA_C"/>
</dbReference>
<dbReference type="InterPro" id="IPR036267">
    <property type="entry name" value="RuvA_C_sf"/>
</dbReference>
<dbReference type="NCBIfam" id="TIGR00084">
    <property type="entry name" value="ruvA"/>
    <property type="match status" value="1"/>
</dbReference>
<dbReference type="Pfam" id="PF14520">
    <property type="entry name" value="HHH_5"/>
    <property type="match status" value="1"/>
</dbReference>
<dbReference type="Pfam" id="PF07499">
    <property type="entry name" value="RuvA_C"/>
    <property type="match status" value="1"/>
</dbReference>
<dbReference type="Pfam" id="PF01330">
    <property type="entry name" value="RuvA_N"/>
    <property type="match status" value="1"/>
</dbReference>
<dbReference type="SMART" id="SM00278">
    <property type="entry name" value="HhH1"/>
    <property type="match status" value="2"/>
</dbReference>
<dbReference type="SUPFAM" id="SSF46929">
    <property type="entry name" value="DNA helicase RuvA subunit, C-terminal domain"/>
    <property type="match status" value="1"/>
</dbReference>
<dbReference type="SUPFAM" id="SSF50249">
    <property type="entry name" value="Nucleic acid-binding proteins"/>
    <property type="match status" value="1"/>
</dbReference>
<dbReference type="SUPFAM" id="SSF47781">
    <property type="entry name" value="RuvA domain 2-like"/>
    <property type="match status" value="1"/>
</dbReference>
<keyword id="KW-0963">Cytoplasm</keyword>
<keyword id="KW-0227">DNA damage</keyword>
<keyword id="KW-0233">DNA recombination</keyword>
<keyword id="KW-0234">DNA repair</keyword>
<keyword id="KW-0238">DNA-binding</keyword>
<evidence type="ECO:0000255" key="1">
    <source>
        <dbReference type="HAMAP-Rule" id="MF_00031"/>
    </source>
</evidence>
<sequence>MYAYLKGIITKITAKYIVLETNGIGYILHVANPYAYSGQVNQEAQIYVHQVVREDAHLLYGFRSEDEKKLFLSLISVSGIGPVSALAIIAADDNAGLVQAIETKNITYLTKFPKIGKKTAQQMVLDLEGKVVVAGDGLPAKVAVQASAENQELEEAMEAMLALGYKATELKKIKKFFEGTTDTAENYIKSALKMLVK</sequence>
<gene>
    <name evidence="1" type="primary">ruvA</name>
    <name type="ordered locus">SPN23F01760</name>
</gene>
<protein>
    <recommendedName>
        <fullName evidence="1">Holliday junction branch migration complex subunit RuvA</fullName>
    </recommendedName>
</protein>
<organism>
    <name type="scientific">Streptococcus pneumoniae (strain ATCC 700669 / Spain 23F-1)</name>
    <dbReference type="NCBI Taxonomy" id="561276"/>
    <lineage>
        <taxon>Bacteria</taxon>
        <taxon>Bacillati</taxon>
        <taxon>Bacillota</taxon>
        <taxon>Bacilli</taxon>
        <taxon>Lactobacillales</taxon>
        <taxon>Streptococcaceae</taxon>
        <taxon>Streptococcus</taxon>
    </lineage>
</organism>